<gene>
    <name type="primary">klcA</name>
    <name type="synonym">kilC</name>
</gene>
<sequence length="142" mass="15654">MNTQDQPVTASLVAEAQRLDFLPTYFGPRLMMRGEALVYAWLRRLCERYNGAYWHYYTLSDGGFYLAPDLAERLEIEVDGNGFRGELSADAAGIVATLFALGQLAAEIAGTDAADALIDRYHFLRGFAAGHPEAAAIYRAID</sequence>
<evidence type="ECO:0000305" key="1"/>
<reference key="1">
    <citation type="journal article" date="1995" name="Microbiology">
        <title>Evolution of the korA-oriV segment of promiscuous IncP plasmids.</title>
        <authorList>
            <person name="Thomas C.M."/>
            <person name="Smith C.A."/>
            <person name="Ibbotson J.P."/>
            <person name="Johnston L."/>
            <person name="Wang N."/>
        </authorList>
    </citation>
    <scope>NUCLEOTIDE SEQUENCE [GENOMIC DNA]</scope>
</reference>
<organism>
    <name type="scientific">Escherichia coli</name>
    <dbReference type="NCBI Taxonomy" id="562"/>
    <lineage>
        <taxon>Bacteria</taxon>
        <taxon>Pseudomonadati</taxon>
        <taxon>Pseudomonadota</taxon>
        <taxon>Gammaproteobacteria</taxon>
        <taxon>Enterobacterales</taxon>
        <taxon>Enterobacteriaceae</taxon>
        <taxon>Escherichia</taxon>
    </lineage>
</organism>
<proteinExistence type="inferred from homology"/>
<feature type="chain" id="PRO_0000068375" description="Antirestriction protein KlcA">
    <location>
        <begin position="1"/>
        <end position="142"/>
    </location>
</feature>
<geneLocation type="plasmid">
    <name>IncP-beta R751</name>
</geneLocation>
<dbReference type="EMBL" id="U67194">
    <property type="protein sequence ID" value="AAC64430.1"/>
    <property type="molecule type" value="Genomic_DNA"/>
</dbReference>
<dbReference type="RefSeq" id="WP_001095942.1">
    <property type="nucleotide sequence ID" value="NZ_JBEEEK010000035.1"/>
</dbReference>
<dbReference type="SMR" id="P52602"/>
<dbReference type="Gene3D" id="3.30.70.3580">
    <property type="entry name" value="Antirestriction protein"/>
    <property type="match status" value="1"/>
</dbReference>
<dbReference type="InterPro" id="IPR004914">
    <property type="entry name" value="Antirestrict"/>
</dbReference>
<dbReference type="InterPro" id="IPR042297">
    <property type="entry name" value="Antirestriction_sf"/>
</dbReference>
<dbReference type="Pfam" id="PF03230">
    <property type="entry name" value="Antirestrict"/>
    <property type="match status" value="1"/>
</dbReference>
<keyword id="KW-0614">Plasmid</keyword>
<protein>
    <recommendedName>
        <fullName>Antirestriction protein KlcA</fullName>
    </recommendedName>
</protein>
<name>KLCA1_ECOLX</name>
<accession>P52602</accession>
<comment type="function">
    <text>Could be involved in overcoming restriction barriers during establishment after conjugative transfer.</text>
</comment>
<comment type="similarity">
    <text evidence="1">Belongs to the antirestriction protein family.</text>
</comment>